<dbReference type="EMBL" id="X54459">
    <property type="protein sequence ID" value="CAA38336.1"/>
    <property type="molecule type" value="Genomic_DNA"/>
</dbReference>
<dbReference type="PIR" id="S23001">
    <property type="entry name" value="S23001"/>
</dbReference>
<dbReference type="RefSeq" id="WP_011205818.1">
    <property type="nucleotide sequence ID" value="NZ_VMTS01000048.1"/>
</dbReference>
<dbReference type="InterPro" id="IPR005094">
    <property type="entry name" value="Endonuclease_MobA/VirD2"/>
</dbReference>
<dbReference type="InterPro" id="IPR040677">
    <property type="entry name" value="LPD7"/>
</dbReference>
<dbReference type="InterPro" id="IPR054461">
    <property type="entry name" value="TraI-like_C"/>
</dbReference>
<dbReference type="InterPro" id="IPR049751">
    <property type="entry name" value="TraI/MobA_relaxases"/>
</dbReference>
<dbReference type="InterPro" id="IPR054462">
    <property type="entry name" value="TraI_M"/>
</dbReference>
<dbReference type="NCBIfam" id="NF041893">
    <property type="entry name" value="TraI_MobP_relax"/>
    <property type="match status" value="1"/>
</dbReference>
<dbReference type="Pfam" id="PF18821">
    <property type="entry name" value="LPD7"/>
    <property type="match status" value="1"/>
</dbReference>
<dbReference type="Pfam" id="PF03432">
    <property type="entry name" value="Relaxase"/>
    <property type="match status" value="1"/>
</dbReference>
<dbReference type="Pfam" id="PF22287">
    <property type="entry name" value="TraI-like_C"/>
    <property type="match status" value="1"/>
</dbReference>
<dbReference type="Pfam" id="PF22863">
    <property type="entry name" value="TraI_middle"/>
    <property type="match status" value="1"/>
</dbReference>
<proteinExistence type="evidence at protein level"/>
<reference key="1">
    <citation type="journal article" date="1991" name="DNA Seq.">
        <title>Nucleotide sequence and organization of genes flanking the transfer origin of promiscuous plasmid RP4.</title>
        <authorList>
            <person name="Ziegelin G."/>
            <person name="Pansegrau W."/>
            <person name="Strack B."/>
            <person name="Balzer D."/>
            <person name="Kroeger M."/>
            <person name="Kruft V."/>
            <person name="Lanka E."/>
        </authorList>
    </citation>
    <scope>NUCLEOTIDE SEQUENCE [GENOMIC DNA]</scope>
    <scope>PROTEIN SEQUENCE OF 1-8</scope>
    <source>
        <strain>ATCC 33694 / HB101</strain>
    </source>
</reference>
<reference key="2">
    <citation type="journal article" date="1990" name="Proc. Natl. Acad. Sci. U.S.A.">
        <title>In vitro assembly of relaxosomes at the transfer origin of plasmid RP4.</title>
        <authorList>
            <person name="Pansegrau W."/>
            <person name="Balzer D."/>
            <person name="Kruft V."/>
            <person name="Lurz R."/>
            <person name="Lanka E."/>
        </authorList>
    </citation>
    <scope>PROTEIN SEQUENCE OF 1-15</scope>
</reference>
<protein>
    <recommendedName>
        <fullName>Protein TraI</fullName>
    </recommendedName>
</protein>
<organism>
    <name type="scientific">Escherichia coli</name>
    <dbReference type="NCBI Taxonomy" id="562"/>
    <lineage>
        <taxon>Bacteria</taxon>
        <taxon>Pseudomonadati</taxon>
        <taxon>Pseudomonadota</taxon>
        <taxon>Gammaproteobacteria</taxon>
        <taxon>Enterobacterales</taxon>
        <taxon>Enterobacteriaceae</taxon>
        <taxon>Escherichia</taxon>
    </lineage>
</organism>
<name>TRAI6_ECOLX</name>
<accession>Q00191</accession>
<gene>
    <name type="primary">traI</name>
</gene>
<feature type="chain" id="PRO_0000068455" description="Protein TraI">
    <location>
        <begin position="1"/>
        <end position="732"/>
    </location>
</feature>
<feature type="region of interest" description="Disordered" evidence="1">
    <location>
        <begin position="508"/>
        <end position="553"/>
    </location>
</feature>
<feature type="compositionally biased region" description="Basic and acidic residues" evidence="1">
    <location>
        <begin position="508"/>
        <end position="528"/>
    </location>
</feature>
<evidence type="ECO:0000256" key="1">
    <source>
        <dbReference type="SAM" id="MobiDB-lite"/>
    </source>
</evidence>
<comment type="function">
    <text>The initiation process of transfer DNA synthesis requires the interaction of at least three plasmid-specific components (TraH, I, and J) at the transfer origin resulting in the assembly of a specialised nucleoprotein complex - the relaxosome. Site- and strand-specific cleavage at the transfer origin is dependent on TraI and TraJ.</text>
</comment>
<keyword id="KW-0184">Conjugation</keyword>
<keyword id="KW-0903">Direct protein sequencing</keyword>
<keyword id="KW-0614">Plasmid</keyword>
<geneLocation type="plasmid">
    <name>IncP-alpha RP4</name>
</geneLocation>
<sequence length="732" mass="81563">MIAKHVPMRSIKKSDFAELVKYITDEQGKTERLGHVRVTNCEANTLPAVMAEVMATQHGNTRSEADKTYHLLVSFRAGEKPDAETLRAIEDRICAGLGFAEHQRVSAVHHDTDNLHIHIAINKIHPTRNTIHEPYRAYRALADLCATLERDYGLERDNHETRQRVSENRANDMERHAGVESLVGWIKRECLPELQAAQSWEDLHRVLRENGLKLRERGNGFIFEAGDGTTVKASTVSRDLSKPKLEARFGAFTPAEGGEAPRRREYRAKPLKTRIDTTELYARYQSERQEMGAVRKGELDTLRRRRDRLIEAAMRSNRLRRAAIKLLGEGRIAKRLMYAQAHKALRADLDKINREYRQGRQAVQERTQRRAWADWLKAEAMKGDDKALAALRAREGRSDLKGNTIQGSGEAKPGHAAVTDNITKKGTIIYRVGSSAVRDDGDRLQVSREATTDGLDAALRLAMERFGDRITVNGTAEFKERIAQAAAAGRLAITFDDAALERRRQELLTKEQAHEQPERNDGRRDRGGDGGIRPAAARTTLNATGGDGDRRDARAVSAGGTVALRKPNVGRIGRKPPPQSQNRLRALSQLGVVRIAGGAEMLLPRDVPGHVEQQGAEPAHALRRGVSGPGRGLKPEQIAAAEKYVAEREQKRLNGFDIPKHARYTDYVGALSYAGTRNVEDQALALLRKENDEILVLPVDKATVQRMKRLAIGDPVTVTPRGSLKTTRGRSR</sequence>